<name>CYSP3_OSTOS</name>
<dbReference type="EC" id="3.4.22.-"/>
<dbReference type="EMBL" id="M88505">
    <property type="protein sequence ID" value="AAA29436.1"/>
    <property type="molecule type" value="Genomic_DNA"/>
</dbReference>
<dbReference type="PIR" id="B48454">
    <property type="entry name" value="B48454"/>
</dbReference>
<dbReference type="SMR" id="Q06544"/>
<dbReference type="GO" id="GO:0008234">
    <property type="term" value="F:cysteine-type peptidase activity"/>
    <property type="evidence" value="ECO:0007669"/>
    <property type="project" value="UniProtKB-KW"/>
</dbReference>
<dbReference type="GO" id="GO:0006508">
    <property type="term" value="P:proteolysis"/>
    <property type="evidence" value="ECO:0007669"/>
    <property type="project" value="UniProtKB-KW"/>
</dbReference>
<dbReference type="Gene3D" id="3.90.70.10">
    <property type="entry name" value="Cysteine proteinases"/>
    <property type="match status" value="1"/>
</dbReference>
<dbReference type="InterPro" id="IPR038765">
    <property type="entry name" value="Papain-like_cys_pep_sf"/>
</dbReference>
<dbReference type="InterPro" id="IPR025661">
    <property type="entry name" value="Pept_asp_AS"/>
</dbReference>
<dbReference type="InterPro" id="IPR025660">
    <property type="entry name" value="Pept_his_AS"/>
</dbReference>
<dbReference type="InterPro" id="IPR013128">
    <property type="entry name" value="Peptidase_C1A"/>
</dbReference>
<dbReference type="InterPro" id="IPR000668">
    <property type="entry name" value="Peptidase_C1A_C"/>
</dbReference>
<dbReference type="PANTHER" id="PTHR12411">
    <property type="entry name" value="CYSTEINE PROTEASE FAMILY C1-RELATED"/>
    <property type="match status" value="1"/>
</dbReference>
<dbReference type="Pfam" id="PF00112">
    <property type="entry name" value="Peptidase_C1"/>
    <property type="match status" value="1"/>
</dbReference>
<dbReference type="SMART" id="SM00645">
    <property type="entry name" value="Pept_C1"/>
    <property type="match status" value="1"/>
</dbReference>
<dbReference type="SUPFAM" id="SSF54001">
    <property type="entry name" value="Cysteine proteinases"/>
    <property type="match status" value="1"/>
</dbReference>
<dbReference type="PROSITE" id="PS00640">
    <property type="entry name" value="THIOL_PROTEASE_ASN"/>
    <property type="match status" value="1"/>
</dbReference>
<dbReference type="PROSITE" id="PS00639">
    <property type="entry name" value="THIOL_PROTEASE_HIS"/>
    <property type="match status" value="1"/>
</dbReference>
<gene>
    <name type="primary">CP-3</name>
</gene>
<keyword id="KW-1015">Disulfide bond</keyword>
<keyword id="KW-0378">Hydrolase</keyword>
<keyword id="KW-0645">Protease</keyword>
<keyword id="KW-0788">Thiol protease</keyword>
<keyword id="KW-0865">Zymogen</keyword>
<proteinExistence type="inferred from homology"/>
<evidence type="ECO:0000250" key="1"/>
<evidence type="ECO:0000255" key="2">
    <source>
        <dbReference type="PROSITE-ProRule" id="PRU10088"/>
    </source>
</evidence>
<evidence type="ECO:0000255" key="3">
    <source>
        <dbReference type="PROSITE-ProRule" id="PRU10089"/>
    </source>
</evidence>
<evidence type="ECO:0000255" key="4">
    <source>
        <dbReference type="PROSITE-ProRule" id="PRU10090"/>
    </source>
</evidence>
<comment type="function">
    <text>Expression of the protease correlates with blood-feeding and suggests a role for the protease in blood digestion.</text>
</comment>
<comment type="similarity">
    <text evidence="2 3 4">Belongs to the peptidase C1 family.</text>
</comment>
<feature type="chain" id="PRO_0000050535" description="Cathepsin B-like cysteine proteinase 3">
    <location>
        <begin position="1" status="less than"/>
        <end position="174"/>
    </location>
</feature>
<feature type="active site" evidence="1">
    <location>
        <position position="122"/>
    </location>
</feature>
<feature type="active site" evidence="1">
    <location>
        <position position="142"/>
    </location>
</feature>
<feature type="disulfide bond" evidence="1">
    <location>
        <begin position="22"/>
        <end position="55"/>
    </location>
</feature>
<feature type="disulfide bond" evidence="1">
    <location>
        <begin position="30"/>
        <end position="42"/>
    </location>
</feature>
<feature type="non-terminal residue">
    <location>
        <position position="1"/>
    </location>
</feature>
<organism>
    <name type="scientific">Ostertagia ostertagi</name>
    <name type="common">Brown stomach worm</name>
    <name type="synonym">Strongylus ostertagi</name>
    <dbReference type="NCBI Taxonomy" id="6317"/>
    <lineage>
        <taxon>Eukaryota</taxon>
        <taxon>Metazoa</taxon>
        <taxon>Ecdysozoa</taxon>
        <taxon>Nematoda</taxon>
        <taxon>Chromadorea</taxon>
        <taxon>Rhabditida</taxon>
        <taxon>Rhabditina</taxon>
        <taxon>Rhabditomorpha</taxon>
        <taxon>Strongyloidea</taxon>
        <taxon>Trichostrongylidae</taxon>
        <taxon>Ostertagia</taxon>
    </lineage>
</organism>
<accession>Q06544</accession>
<protein>
    <recommendedName>
        <fullName>Cathepsin B-like cysteine proteinase 3</fullName>
        <ecNumber>3.4.22.-</ecNumber>
    </recommendedName>
</protein>
<reference key="1">
    <citation type="journal article" date="1992" name="Mol. Biochem. Parasitol.">
        <title>Isolation of putative cysteine protease genes of Ostertagia ostertagi.</title>
        <authorList>
            <person name="Pratt D."/>
            <person name="Boisvenue R.J."/>
            <person name="Cox G.N."/>
        </authorList>
    </citation>
    <scope>NUCLEOTIDE SEQUENCE [GENOMIC DNA]</scope>
    <source>
        <tissue>Larva</tissue>
    </source>
</reference>
<sequence>AWQYFALEGVVTGGNYRKQGCCRPYEFPPCGRHGKEPYYGECYDTAKTPKCQKTCQRGYLKAYKEDKHFGKSAYRLPNNVKAIQRDIMKNGPVVAGFIVYEDFAHYKSGIYKHTAGRMTGGHAVKIIGWGKEKGTPYWLIANSWHDDWGEKGFYRMIRGINNCRIEEMVFAGIV</sequence>